<name>GLRX1_RICTY</name>
<keyword id="KW-0963">Cytoplasm</keyword>
<keyword id="KW-1015">Disulfide bond</keyword>
<keyword id="KW-0249">Electron transport</keyword>
<keyword id="KW-0676">Redox-active center</keyword>
<keyword id="KW-0813">Transport</keyword>
<reference key="1">
    <citation type="journal article" date="2004" name="J. Bacteriol.">
        <title>Complete genome sequence of Rickettsia typhi and comparison with sequences of other Rickettsiae.</title>
        <authorList>
            <person name="McLeod M.P."/>
            <person name="Qin X."/>
            <person name="Karpathy S.E."/>
            <person name="Gioia J."/>
            <person name="Highlander S.K."/>
            <person name="Fox G.E."/>
            <person name="McNeill T.Z."/>
            <person name="Jiang H."/>
            <person name="Muzny D."/>
            <person name="Jacob L.S."/>
            <person name="Hawes A.C."/>
            <person name="Sodergren E."/>
            <person name="Gill R."/>
            <person name="Hume J."/>
            <person name="Morgan M."/>
            <person name="Fan G."/>
            <person name="Amin A.G."/>
            <person name="Gibbs R.A."/>
            <person name="Hong C."/>
            <person name="Yu X.-J."/>
            <person name="Walker D.H."/>
            <person name="Weinstock G.M."/>
        </authorList>
    </citation>
    <scope>NUCLEOTIDE SEQUENCE [LARGE SCALE GENOMIC DNA]</scope>
    <source>
        <strain>ATCC VR-144 / Wilmington</strain>
    </source>
</reference>
<gene>
    <name type="primary">grxC1</name>
    <name type="synonym">grx</name>
    <name type="ordered locus">RT0194</name>
</gene>
<evidence type="ECO:0000250" key="1"/>
<evidence type="ECO:0000255" key="2">
    <source>
        <dbReference type="PROSITE-ProRule" id="PRU00686"/>
    </source>
</evidence>
<evidence type="ECO:0000305" key="3"/>
<accession>Q68XG4</accession>
<comment type="function">
    <text evidence="1">Has a glutathione-disulfide oxidoreductase activity in the presence of NADPH and glutathione reductase. Reduces low molecular weight disulfides and proteins (By similarity).</text>
</comment>
<comment type="subunit">
    <text evidence="1">Monomer.</text>
</comment>
<comment type="subcellular location">
    <subcellularLocation>
        <location evidence="1">Cytoplasm</location>
    </subcellularLocation>
</comment>
<comment type="similarity">
    <text evidence="3">Belongs to the glutaredoxin family.</text>
</comment>
<dbReference type="EMBL" id="AE017197">
    <property type="protein sequence ID" value="AAU03678.1"/>
    <property type="molecule type" value="Genomic_DNA"/>
</dbReference>
<dbReference type="SMR" id="Q68XG4"/>
<dbReference type="KEGG" id="rty:RT0194"/>
<dbReference type="eggNOG" id="COG0695">
    <property type="taxonomic scope" value="Bacteria"/>
</dbReference>
<dbReference type="HOGENOM" id="CLU_026126_7_3_5"/>
<dbReference type="OrthoDB" id="9814618at2"/>
<dbReference type="Proteomes" id="UP000000604">
    <property type="component" value="Chromosome"/>
</dbReference>
<dbReference type="GO" id="GO:0005737">
    <property type="term" value="C:cytoplasm"/>
    <property type="evidence" value="ECO:0007669"/>
    <property type="project" value="UniProtKB-SubCell"/>
</dbReference>
<dbReference type="GO" id="GO:0015038">
    <property type="term" value="F:glutathione disulfide oxidoreductase activity"/>
    <property type="evidence" value="ECO:0007669"/>
    <property type="project" value="TreeGrafter"/>
</dbReference>
<dbReference type="GO" id="GO:0045454">
    <property type="term" value="P:cell redox homeostasis"/>
    <property type="evidence" value="ECO:0007669"/>
    <property type="project" value="InterPro"/>
</dbReference>
<dbReference type="GO" id="GO:0034599">
    <property type="term" value="P:cellular response to oxidative stress"/>
    <property type="evidence" value="ECO:0007669"/>
    <property type="project" value="TreeGrafter"/>
</dbReference>
<dbReference type="CDD" id="cd03418">
    <property type="entry name" value="GRX_GRXb_1_3_like"/>
    <property type="match status" value="1"/>
</dbReference>
<dbReference type="FunFam" id="3.40.30.10:FF:000018">
    <property type="entry name" value="Glutaredoxin"/>
    <property type="match status" value="1"/>
</dbReference>
<dbReference type="Gene3D" id="3.40.30.10">
    <property type="entry name" value="Glutaredoxin"/>
    <property type="match status" value="1"/>
</dbReference>
<dbReference type="InterPro" id="IPR011767">
    <property type="entry name" value="GLR_AS"/>
</dbReference>
<dbReference type="InterPro" id="IPR002109">
    <property type="entry name" value="Glutaredoxin"/>
</dbReference>
<dbReference type="InterPro" id="IPR014025">
    <property type="entry name" value="Glutaredoxin_subgr"/>
</dbReference>
<dbReference type="InterPro" id="IPR011900">
    <property type="entry name" value="GRX_bact"/>
</dbReference>
<dbReference type="InterPro" id="IPR036249">
    <property type="entry name" value="Thioredoxin-like_sf"/>
</dbReference>
<dbReference type="NCBIfam" id="TIGR02181">
    <property type="entry name" value="GRX_bact"/>
    <property type="match status" value="1"/>
</dbReference>
<dbReference type="PANTHER" id="PTHR45694">
    <property type="entry name" value="GLUTAREDOXIN 2"/>
    <property type="match status" value="1"/>
</dbReference>
<dbReference type="PANTHER" id="PTHR45694:SF18">
    <property type="entry name" value="GLUTAREDOXIN-1-RELATED"/>
    <property type="match status" value="1"/>
</dbReference>
<dbReference type="Pfam" id="PF00462">
    <property type="entry name" value="Glutaredoxin"/>
    <property type="match status" value="1"/>
</dbReference>
<dbReference type="PRINTS" id="PR00160">
    <property type="entry name" value="GLUTAREDOXIN"/>
</dbReference>
<dbReference type="SUPFAM" id="SSF52833">
    <property type="entry name" value="Thioredoxin-like"/>
    <property type="match status" value="1"/>
</dbReference>
<dbReference type="PROSITE" id="PS00195">
    <property type="entry name" value="GLUTAREDOXIN_1"/>
    <property type="match status" value="1"/>
</dbReference>
<dbReference type="PROSITE" id="PS51354">
    <property type="entry name" value="GLUTAREDOXIN_2"/>
    <property type="match status" value="1"/>
</dbReference>
<feature type="chain" id="PRO_0000288737" description="Glutaredoxin 1">
    <location>
        <begin position="1"/>
        <end position="104"/>
    </location>
</feature>
<feature type="domain" description="Glutaredoxin" evidence="2">
    <location>
        <begin position="1"/>
        <end position="96"/>
    </location>
</feature>
<feature type="disulfide bond" description="Redox-active" evidence="1">
    <location>
        <begin position="17"/>
        <end position="20"/>
    </location>
</feature>
<organism>
    <name type="scientific">Rickettsia typhi (strain ATCC VR-144 / Wilmington)</name>
    <dbReference type="NCBI Taxonomy" id="257363"/>
    <lineage>
        <taxon>Bacteria</taxon>
        <taxon>Pseudomonadati</taxon>
        <taxon>Pseudomonadota</taxon>
        <taxon>Alphaproteobacteria</taxon>
        <taxon>Rickettsiales</taxon>
        <taxon>Rickettsiaceae</taxon>
        <taxon>Rickettsieae</taxon>
        <taxon>Rickettsia</taxon>
        <taxon>typhus group</taxon>
    </lineage>
</organism>
<protein>
    <recommendedName>
        <fullName>Glutaredoxin 1</fullName>
    </recommendedName>
</protein>
<sequence>MNKSILHTIIIYTLASCPYCIKAKALLDKKNVIYEEIEVSNFTQEEKEAFIKKSGGKNTVPQIFIDNMHVGGCDDLFNLEQDGRLDKLLETQPKNKNSLTVSGA</sequence>
<proteinExistence type="inferred from homology"/>